<sequence length="286" mass="31047">MMMGQDEVGSDQTQIIKGKRTKRQRSSSTFVVTAATTVTSTSSSAGGSGGERAVSDEYNSAVSSPVTTDCTQEEEDMAICLIMLARGTVLPSPDLKNSRKIHQKISSENSSFYVYECKTCNRTFSSFQALGGHRASHKKPRTSTEEKTRLPLTQPKSSASEEGQNSHFKVSGSALASQASNIINKANKVHECSICGSEFTSGQALGGHMRRHRTAVTTISPVAATAEVSRNSTEEEIEINIGRSMEQQRKYLPLDLNLPAPEDDLRESKFQGIVFSATPALIDCHY</sequence>
<keyword id="KW-0479">Metal-binding</keyword>
<keyword id="KW-0539">Nucleus</keyword>
<keyword id="KW-1185">Reference proteome</keyword>
<keyword id="KW-0677">Repeat</keyword>
<keyword id="KW-0804">Transcription</keyword>
<keyword id="KW-0805">Transcription regulation</keyword>
<keyword id="KW-0862">Zinc</keyword>
<keyword id="KW-0863">Zinc-finger</keyword>
<reference key="1">
    <citation type="journal article" date="1997" name="Plant Mol. Biol.">
        <title>Isolation and characterisation of a diverse family of Arabidopsis two and three-fingered protein genes and cDNA's.</title>
        <authorList>
            <person name="Meissner R."/>
            <person name="Michael A.J."/>
        </authorList>
    </citation>
    <scope>NUCLEOTIDE SEQUENCE [GENOMIC DNA / MRNA]</scope>
    <scope>TISSUE SPECIFICITY</scope>
    <source>
        <strain>cv. Columbia</strain>
    </source>
</reference>
<reference key="2">
    <citation type="journal article" date="1999" name="Nature">
        <title>Sequence and analysis of chromosome 2 of the plant Arabidopsis thaliana.</title>
        <authorList>
            <person name="Lin X."/>
            <person name="Kaul S."/>
            <person name="Rounsley S.D."/>
            <person name="Shea T.P."/>
            <person name="Benito M.-I."/>
            <person name="Town C.D."/>
            <person name="Fujii C.Y."/>
            <person name="Mason T.M."/>
            <person name="Bowman C.L."/>
            <person name="Barnstead M.E."/>
            <person name="Feldblyum T.V."/>
            <person name="Buell C.R."/>
            <person name="Ketchum K.A."/>
            <person name="Lee J.J."/>
            <person name="Ronning C.M."/>
            <person name="Koo H.L."/>
            <person name="Moffat K.S."/>
            <person name="Cronin L.A."/>
            <person name="Shen M."/>
            <person name="Pai G."/>
            <person name="Van Aken S."/>
            <person name="Umayam L."/>
            <person name="Tallon L.J."/>
            <person name="Gill J.E."/>
            <person name="Adams M.D."/>
            <person name="Carrera A.J."/>
            <person name="Creasy T.H."/>
            <person name="Goodman H.M."/>
            <person name="Somerville C.R."/>
            <person name="Copenhaver G.P."/>
            <person name="Preuss D."/>
            <person name="Nierman W.C."/>
            <person name="White O."/>
            <person name="Eisen J.A."/>
            <person name="Salzberg S.L."/>
            <person name="Fraser C.M."/>
            <person name="Venter J.C."/>
        </authorList>
    </citation>
    <scope>NUCLEOTIDE SEQUENCE [LARGE SCALE GENOMIC DNA]</scope>
    <source>
        <strain>cv. Columbia</strain>
    </source>
</reference>
<reference key="3">
    <citation type="journal article" date="2017" name="Plant J.">
        <title>Araport11: a complete reannotation of the Arabidopsis thaliana reference genome.</title>
        <authorList>
            <person name="Cheng C.Y."/>
            <person name="Krishnakumar V."/>
            <person name="Chan A.P."/>
            <person name="Thibaud-Nissen F."/>
            <person name="Schobel S."/>
            <person name="Town C.D."/>
        </authorList>
    </citation>
    <scope>GENOME REANNOTATION</scope>
    <source>
        <strain>cv. Columbia</strain>
    </source>
</reference>
<reference key="4">
    <citation type="journal article" date="2002" name="Science">
        <title>Functional annotation of a full-length Arabidopsis cDNA collection.</title>
        <authorList>
            <person name="Seki M."/>
            <person name="Narusaka M."/>
            <person name="Kamiya A."/>
            <person name="Ishida J."/>
            <person name="Satou M."/>
            <person name="Sakurai T."/>
            <person name="Nakajima M."/>
            <person name="Enju A."/>
            <person name="Akiyama K."/>
            <person name="Oono Y."/>
            <person name="Muramatsu M."/>
            <person name="Hayashizaki Y."/>
            <person name="Kawai J."/>
            <person name="Carninci P."/>
            <person name="Itoh M."/>
            <person name="Ishii Y."/>
            <person name="Arakawa T."/>
            <person name="Shibata K."/>
            <person name="Shinagawa A."/>
            <person name="Shinozaki K."/>
        </authorList>
    </citation>
    <scope>NUCLEOTIDE SEQUENCE [LARGE SCALE MRNA]</scope>
    <source>
        <strain>cv. Columbia</strain>
    </source>
</reference>
<reference key="5">
    <citation type="submission" date="2006-07" db="EMBL/GenBank/DDBJ databases">
        <title>Large-scale analysis of RIKEN Arabidopsis full-length (RAFL) cDNAs.</title>
        <authorList>
            <person name="Totoki Y."/>
            <person name="Seki M."/>
            <person name="Ishida J."/>
            <person name="Nakajima M."/>
            <person name="Enju A."/>
            <person name="Kamiya A."/>
            <person name="Narusaka M."/>
            <person name="Shin-i T."/>
            <person name="Nakagawa M."/>
            <person name="Sakamoto N."/>
            <person name="Oishi K."/>
            <person name="Kohara Y."/>
            <person name="Kobayashi M."/>
            <person name="Toyoda A."/>
            <person name="Sakaki Y."/>
            <person name="Sakurai T."/>
            <person name="Iida K."/>
            <person name="Akiyama K."/>
            <person name="Satou M."/>
            <person name="Toyoda T."/>
            <person name="Konagaya A."/>
            <person name="Carninci P."/>
            <person name="Kawai J."/>
            <person name="Hayashizaki Y."/>
            <person name="Shinozaki K."/>
        </authorList>
    </citation>
    <scope>NUCLEOTIDE SEQUENCE [LARGE SCALE MRNA]</scope>
    <source>
        <strain>cv. Columbia</strain>
    </source>
</reference>
<reference key="6">
    <citation type="journal article" date="2003" name="Plant Cell">
        <title>Gibberellin biosynthesis and response during Arabidopsis seed germination.</title>
        <authorList>
            <person name="Ogawa M."/>
            <person name="Hanada A."/>
            <person name="Yamauchi Y."/>
            <person name="Kuwahara A."/>
            <person name="Kamiya Y."/>
            <person name="Yamaguchi S."/>
        </authorList>
    </citation>
    <scope>INDUCTION BY GIBBERELLIN</scope>
</reference>
<reference key="7">
    <citation type="journal article" date="2005" name="Plant Physiol.">
        <title>Ascorbic acid deficiency activates cell death and disease resistance responses in Arabidopsis.</title>
        <authorList>
            <person name="Pavet V."/>
            <person name="Olmos E."/>
            <person name="Kiddle G."/>
            <person name="Mowla S."/>
            <person name="Kumar S."/>
            <person name="Antoniw J."/>
            <person name="Alvarez M.E."/>
            <person name="Foyer C.H."/>
        </authorList>
    </citation>
    <scope>INDUCTION</scope>
</reference>
<organism>
    <name type="scientific">Arabidopsis thaliana</name>
    <name type="common">Mouse-ear cress</name>
    <dbReference type="NCBI Taxonomy" id="3702"/>
    <lineage>
        <taxon>Eukaryota</taxon>
        <taxon>Viridiplantae</taxon>
        <taxon>Streptophyta</taxon>
        <taxon>Embryophyta</taxon>
        <taxon>Tracheophyta</taxon>
        <taxon>Spermatophyta</taxon>
        <taxon>Magnoliopsida</taxon>
        <taxon>eudicotyledons</taxon>
        <taxon>Gunneridae</taxon>
        <taxon>Pentapetalae</taxon>
        <taxon>rosids</taxon>
        <taxon>malvids</taxon>
        <taxon>Brassicales</taxon>
        <taxon>Brassicaceae</taxon>
        <taxon>Camelineae</taxon>
        <taxon>Arabidopsis</taxon>
    </lineage>
</organism>
<dbReference type="EMBL" id="X98675">
    <property type="protein sequence ID" value="CAA67233.1"/>
    <property type="status" value="ALT_INIT"/>
    <property type="molecule type" value="Genomic_DNA"/>
</dbReference>
<dbReference type="EMBL" id="X98678">
    <property type="protein sequence ID" value="CAA67236.1"/>
    <property type="status" value="ALT_INIT"/>
    <property type="molecule type" value="mRNA"/>
</dbReference>
<dbReference type="EMBL" id="AC006202">
    <property type="protein sequence ID" value="AAD29833.1"/>
    <property type="status" value="ALT_INIT"/>
    <property type="molecule type" value="Genomic_DNA"/>
</dbReference>
<dbReference type="EMBL" id="CP002685">
    <property type="protein sequence ID" value="AEC08090.1"/>
    <property type="molecule type" value="Genomic_DNA"/>
</dbReference>
<dbReference type="EMBL" id="AK175493">
    <property type="protein sequence ID" value="BAD43256.1"/>
    <property type="molecule type" value="mRNA"/>
</dbReference>
<dbReference type="EMBL" id="AK229812">
    <property type="protein sequence ID" value="BAF01643.1"/>
    <property type="molecule type" value="mRNA"/>
</dbReference>
<dbReference type="PIR" id="A84682">
    <property type="entry name" value="A84682"/>
</dbReference>
<dbReference type="RefSeq" id="NP_180387.2">
    <property type="nucleotide sequence ID" value="NM_128380.5"/>
</dbReference>
<dbReference type="BioGRID" id="2716">
    <property type="interactions" value="3"/>
</dbReference>
<dbReference type="FunCoup" id="Q681X4">
    <property type="interactions" value="11"/>
</dbReference>
<dbReference type="IntAct" id="Q681X4">
    <property type="interactions" value="3"/>
</dbReference>
<dbReference type="STRING" id="3702.Q681X4"/>
<dbReference type="GlyGen" id="Q681X4">
    <property type="glycosylation" value="1 site"/>
</dbReference>
<dbReference type="iPTMnet" id="Q681X4"/>
<dbReference type="PaxDb" id="3702-AT2G28200.1"/>
<dbReference type="ProteomicsDB" id="242979"/>
<dbReference type="EnsemblPlants" id="AT2G28200.1">
    <property type="protein sequence ID" value="AT2G28200.1"/>
    <property type="gene ID" value="AT2G28200"/>
</dbReference>
<dbReference type="GeneID" id="817366"/>
<dbReference type="Gramene" id="AT2G28200.1">
    <property type="protein sequence ID" value="AT2G28200.1"/>
    <property type="gene ID" value="AT2G28200"/>
</dbReference>
<dbReference type="KEGG" id="ath:AT2G28200"/>
<dbReference type="Araport" id="AT2G28200"/>
<dbReference type="TAIR" id="AT2G28200"/>
<dbReference type="eggNOG" id="KOG1721">
    <property type="taxonomic scope" value="Eukaryota"/>
</dbReference>
<dbReference type="HOGENOM" id="CLU_059471_0_0_1"/>
<dbReference type="InParanoid" id="Q681X4"/>
<dbReference type="OMA" id="QASQMIM"/>
<dbReference type="OrthoDB" id="6077919at2759"/>
<dbReference type="PhylomeDB" id="Q681X4"/>
<dbReference type="PRO" id="PR:Q681X4"/>
<dbReference type="Proteomes" id="UP000006548">
    <property type="component" value="Chromosome 2"/>
</dbReference>
<dbReference type="ExpressionAtlas" id="Q681X4">
    <property type="expression patterns" value="baseline and differential"/>
</dbReference>
<dbReference type="GO" id="GO:0005634">
    <property type="term" value="C:nucleus"/>
    <property type="evidence" value="ECO:0007669"/>
    <property type="project" value="UniProtKB-SubCell"/>
</dbReference>
<dbReference type="GO" id="GO:0003700">
    <property type="term" value="F:DNA-binding transcription factor activity"/>
    <property type="evidence" value="ECO:0000250"/>
    <property type="project" value="TAIR"/>
</dbReference>
<dbReference type="GO" id="GO:0000976">
    <property type="term" value="F:transcription cis-regulatory region binding"/>
    <property type="evidence" value="ECO:0000353"/>
    <property type="project" value="TAIR"/>
</dbReference>
<dbReference type="GO" id="GO:0008270">
    <property type="term" value="F:zinc ion binding"/>
    <property type="evidence" value="ECO:0007669"/>
    <property type="project" value="UniProtKB-KW"/>
</dbReference>
<dbReference type="GO" id="GO:0006355">
    <property type="term" value="P:regulation of DNA-templated transcription"/>
    <property type="evidence" value="ECO:0000304"/>
    <property type="project" value="TAIR"/>
</dbReference>
<dbReference type="Gene3D" id="3.30.160.60">
    <property type="entry name" value="Classic Zinc Finger"/>
    <property type="match status" value="2"/>
</dbReference>
<dbReference type="InterPro" id="IPR036236">
    <property type="entry name" value="Znf_C2H2_sf"/>
</dbReference>
<dbReference type="InterPro" id="IPR013087">
    <property type="entry name" value="Znf_C2H2_type"/>
</dbReference>
<dbReference type="PANTHER" id="PTHR26374">
    <property type="entry name" value="ZINC FINGER PROTEIN ZAT5"/>
    <property type="match status" value="1"/>
</dbReference>
<dbReference type="PANTHER" id="PTHR26374:SF421">
    <property type="entry name" value="ZINC FINGER PROTEIN ZAT5"/>
    <property type="match status" value="1"/>
</dbReference>
<dbReference type="Pfam" id="PF13912">
    <property type="entry name" value="zf-C2H2_6"/>
    <property type="match status" value="2"/>
</dbReference>
<dbReference type="SMART" id="SM00355">
    <property type="entry name" value="ZnF_C2H2"/>
    <property type="match status" value="2"/>
</dbReference>
<dbReference type="SUPFAM" id="SSF57667">
    <property type="entry name" value="beta-beta-alpha zinc fingers"/>
    <property type="match status" value="1"/>
</dbReference>
<dbReference type="PROSITE" id="PS00028">
    <property type="entry name" value="ZINC_FINGER_C2H2_1"/>
    <property type="match status" value="2"/>
</dbReference>
<dbReference type="PROSITE" id="PS50157">
    <property type="entry name" value="ZINC_FINGER_C2H2_2"/>
    <property type="match status" value="2"/>
</dbReference>
<comment type="function">
    <text evidence="1">Probable transcription factor that may be involved in stress responses.</text>
</comment>
<comment type="subcellular location">
    <subcellularLocation>
        <location evidence="7">Nucleus</location>
    </subcellularLocation>
</comment>
<comment type="tissue specificity">
    <text evidence="6">Expressed in flowers and siliques.</text>
</comment>
<comment type="induction">
    <text evidence="4 5">By gibberellin and H(2)O(2). Down-regulated by ascorbate.</text>
</comment>
<comment type="sequence caution" evidence="7">
    <conflict type="erroneous initiation">
        <sequence resource="EMBL-CDS" id="AAD29833"/>
    </conflict>
    <text>Truncated N-terminus.</text>
</comment>
<comment type="sequence caution" evidence="7">
    <conflict type="erroneous initiation">
        <sequence resource="EMBL-CDS" id="CAA67233"/>
    </conflict>
    <text>Truncated N-terminus.</text>
</comment>
<comment type="sequence caution" evidence="7">
    <conflict type="erroneous initiation">
        <sequence resource="EMBL-CDS" id="CAA67236"/>
    </conflict>
    <text>Truncated N-terminus.</text>
</comment>
<proteinExistence type="evidence at transcript level"/>
<name>ZAT5_ARATH</name>
<accession>Q681X4</accession>
<accession>Q42375</accession>
<accession>Q9SL35</accession>
<feature type="chain" id="PRO_0000409714" description="Zinc finger protein ZAT5">
    <location>
        <begin position="1"/>
        <end position="286"/>
    </location>
</feature>
<feature type="zinc finger region" description="C2H2-type 1" evidence="2">
    <location>
        <begin position="115"/>
        <end position="137"/>
    </location>
</feature>
<feature type="zinc finger region" description="C2H2-type 2" evidence="2">
    <location>
        <begin position="190"/>
        <end position="212"/>
    </location>
</feature>
<feature type="region of interest" description="Disordered" evidence="3">
    <location>
        <begin position="1"/>
        <end position="28"/>
    </location>
</feature>
<feature type="region of interest" description="Disordered" evidence="3">
    <location>
        <begin position="40"/>
        <end position="60"/>
    </location>
</feature>
<feature type="region of interest" description="Disordered" evidence="3">
    <location>
        <begin position="131"/>
        <end position="171"/>
    </location>
</feature>
<feature type="compositionally biased region" description="Polar residues" evidence="3">
    <location>
        <begin position="154"/>
        <end position="171"/>
    </location>
</feature>
<feature type="sequence conflict" description="In Ref. 1; CAA67233/CAA67236." evidence="7" ref="1">
    <original>E</original>
    <variation>G</variation>
    <location>
        <position position="262"/>
    </location>
</feature>
<gene>
    <name type="primary">ZAT5</name>
    <name type="ordered locus">At2g28200</name>
    <name type="ORF">T3B23.13</name>
</gene>
<evidence type="ECO:0000250" key="1"/>
<evidence type="ECO:0000255" key="2">
    <source>
        <dbReference type="PROSITE-ProRule" id="PRU00042"/>
    </source>
</evidence>
<evidence type="ECO:0000256" key="3">
    <source>
        <dbReference type="SAM" id="MobiDB-lite"/>
    </source>
</evidence>
<evidence type="ECO:0000269" key="4">
    <source>
    </source>
</evidence>
<evidence type="ECO:0000269" key="5">
    <source>
    </source>
</evidence>
<evidence type="ECO:0000269" key="6">
    <source>
    </source>
</evidence>
<evidence type="ECO:0000305" key="7"/>
<protein>
    <recommendedName>
        <fullName>Zinc finger protein ZAT5</fullName>
    </recommendedName>
</protein>